<dbReference type="EMBL" id="AL596170">
    <property type="protein sequence ID" value="CAC97233.1"/>
    <property type="molecule type" value="Genomic_DNA"/>
</dbReference>
<dbReference type="PIR" id="AI1682">
    <property type="entry name" value="AI1682"/>
</dbReference>
<dbReference type="RefSeq" id="WP_003763057.1">
    <property type="nucleotide sequence ID" value="NC_003212.1"/>
</dbReference>
<dbReference type="SMR" id="Q92AB9"/>
<dbReference type="STRING" id="272626.gene:17566361"/>
<dbReference type="GeneID" id="93235341"/>
<dbReference type="KEGG" id="lin:lin2003"/>
<dbReference type="eggNOG" id="COG4474">
    <property type="taxonomic scope" value="Bacteria"/>
</dbReference>
<dbReference type="HOGENOM" id="CLU_105319_0_0_9"/>
<dbReference type="OrthoDB" id="2301957at2"/>
<dbReference type="Proteomes" id="UP000002513">
    <property type="component" value="Chromosome"/>
</dbReference>
<dbReference type="Gene3D" id="3.40.50.450">
    <property type="match status" value="1"/>
</dbReference>
<dbReference type="HAMAP" id="MF_01575">
    <property type="entry name" value="UPF0398"/>
    <property type="match status" value="1"/>
</dbReference>
<dbReference type="InterPro" id="IPR010697">
    <property type="entry name" value="YspA"/>
</dbReference>
<dbReference type="NCBIfam" id="NF010181">
    <property type="entry name" value="PRK13660.1"/>
    <property type="match status" value="1"/>
</dbReference>
<dbReference type="PANTHER" id="PTHR38440:SF1">
    <property type="entry name" value="UPF0398 PROTEIN SPR0331"/>
    <property type="match status" value="1"/>
</dbReference>
<dbReference type="PANTHER" id="PTHR38440">
    <property type="entry name" value="UPF0398 PROTEIN YPSA"/>
    <property type="match status" value="1"/>
</dbReference>
<dbReference type="Pfam" id="PF06908">
    <property type="entry name" value="YpsA"/>
    <property type="match status" value="1"/>
</dbReference>
<dbReference type="PIRSF" id="PIRSF021290">
    <property type="entry name" value="DUF1273"/>
    <property type="match status" value="1"/>
</dbReference>
<dbReference type="SUPFAM" id="SSF102405">
    <property type="entry name" value="MCP/YpsA-like"/>
    <property type="match status" value="1"/>
</dbReference>
<gene>
    <name type="ordered locus">lin2003</name>
</gene>
<protein>
    <recommendedName>
        <fullName evidence="1">UPF0398 protein lin2003</fullName>
    </recommendedName>
</protein>
<name>Y2003_LISIN</name>
<organism>
    <name type="scientific">Listeria innocua serovar 6a (strain ATCC BAA-680 / CLIP 11262)</name>
    <dbReference type="NCBI Taxonomy" id="272626"/>
    <lineage>
        <taxon>Bacteria</taxon>
        <taxon>Bacillati</taxon>
        <taxon>Bacillota</taxon>
        <taxon>Bacilli</taxon>
        <taxon>Bacillales</taxon>
        <taxon>Listeriaceae</taxon>
        <taxon>Listeria</taxon>
    </lineage>
</organism>
<evidence type="ECO:0000255" key="1">
    <source>
        <dbReference type="HAMAP-Rule" id="MF_01575"/>
    </source>
</evidence>
<sequence length="181" mass="20739">MKSIAVTGYKNFELGIFKKDADEAVYIKETIKRHLIPLIEDGLEWVIISGQLGIELWAGEVVALLKEEYPIKLAVLEPFEKQSANWNENNQLWAQEVIGAADYHAFITKRPYESPAQFAARDGFIIDNTDGALLVYDLEKEGSPKFFYDRAKLAKEQANYFLECIDFYALQDVVEDMNQTF</sequence>
<accession>Q92AB9</accession>
<feature type="chain" id="PRO_0000267164" description="UPF0398 protein lin2003">
    <location>
        <begin position="1"/>
        <end position="181"/>
    </location>
</feature>
<comment type="similarity">
    <text evidence="1">Belongs to the UPF0398 family.</text>
</comment>
<reference key="1">
    <citation type="journal article" date="2001" name="Science">
        <title>Comparative genomics of Listeria species.</title>
        <authorList>
            <person name="Glaser P."/>
            <person name="Frangeul L."/>
            <person name="Buchrieser C."/>
            <person name="Rusniok C."/>
            <person name="Amend A."/>
            <person name="Baquero F."/>
            <person name="Berche P."/>
            <person name="Bloecker H."/>
            <person name="Brandt P."/>
            <person name="Chakraborty T."/>
            <person name="Charbit A."/>
            <person name="Chetouani F."/>
            <person name="Couve E."/>
            <person name="de Daruvar A."/>
            <person name="Dehoux P."/>
            <person name="Domann E."/>
            <person name="Dominguez-Bernal G."/>
            <person name="Duchaud E."/>
            <person name="Durant L."/>
            <person name="Dussurget O."/>
            <person name="Entian K.-D."/>
            <person name="Fsihi H."/>
            <person name="Garcia-del Portillo F."/>
            <person name="Garrido P."/>
            <person name="Gautier L."/>
            <person name="Goebel W."/>
            <person name="Gomez-Lopez N."/>
            <person name="Hain T."/>
            <person name="Hauf J."/>
            <person name="Jackson D."/>
            <person name="Jones L.-M."/>
            <person name="Kaerst U."/>
            <person name="Kreft J."/>
            <person name="Kuhn M."/>
            <person name="Kunst F."/>
            <person name="Kurapkat G."/>
            <person name="Madueno E."/>
            <person name="Maitournam A."/>
            <person name="Mata Vicente J."/>
            <person name="Ng E."/>
            <person name="Nedjari H."/>
            <person name="Nordsiek G."/>
            <person name="Novella S."/>
            <person name="de Pablos B."/>
            <person name="Perez-Diaz J.-C."/>
            <person name="Purcell R."/>
            <person name="Remmel B."/>
            <person name="Rose M."/>
            <person name="Schlueter T."/>
            <person name="Simoes N."/>
            <person name="Tierrez A."/>
            <person name="Vazquez-Boland J.-A."/>
            <person name="Voss H."/>
            <person name="Wehland J."/>
            <person name="Cossart P."/>
        </authorList>
    </citation>
    <scope>NUCLEOTIDE SEQUENCE [LARGE SCALE GENOMIC DNA]</scope>
    <source>
        <strain>ATCC BAA-680 / CLIP 11262</strain>
    </source>
</reference>
<proteinExistence type="inferred from homology"/>